<name>K1A_THAAS</name>
<keyword id="KW-0165">Cleavage on pair of basic residues</keyword>
<keyword id="KW-1015">Disulfide bond</keyword>
<keyword id="KW-0872">Ion channel impairing toxin</keyword>
<keyword id="KW-0166">Nematocyst</keyword>
<keyword id="KW-0528">Neurotoxin</keyword>
<keyword id="KW-0632">Potassium channel impairing toxin</keyword>
<keyword id="KW-0964">Secreted</keyword>
<keyword id="KW-0732">Signal</keyword>
<keyword id="KW-0800">Toxin</keyword>
<keyword id="KW-1220">Voltage-gated potassium channel impairing toxin</keyword>
<dbReference type="EMBL" id="AB595209">
    <property type="protein sequence ID" value="BAJ23163.1"/>
    <property type="molecule type" value="mRNA"/>
</dbReference>
<dbReference type="SMR" id="E2S066"/>
<dbReference type="GO" id="GO:0005576">
    <property type="term" value="C:extracellular region"/>
    <property type="evidence" value="ECO:0007669"/>
    <property type="project" value="UniProtKB-SubCell"/>
</dbReference>
<dbReference type="GO" id="GO:0042151">
    <property type="term" value="C:nematocyst"/>
    <property type="evidence" value="ECO:0007669"/>
    <property type="project" value="UniProtKB-SubCell"/>
</dbReference>
<dbReference type="GO" id="GO:0015459">
    <property type="term" value="F:potassium channel regulator activity"/>
    <property type="evidence" value="ECO:0007669"/>
    <property type="project" value="UniProtKB-KW"/>
</dbReference>
<dbReference type="GO" id="GO:0090729">
    <property type="term" value="F:toxin activity"/>
    <property type="evidence" value="ECO:0007669"/>
    <property type="project" value="UniProtKB-KW"/>
</dbReference>
<dbReference type="InterPro" id="IPR003582">
    <property type="entry name" value="ShKT_dom"/>
</dbReference>
<dbReference type="SUPFAM" id="SSF57546">
    <property type="entry name" value="Crisp domain-like"/>
    <property type="match status" value="1"/>
</dbReference>
<dbReference type="PROSITE" id="PS51670">
    <property type="entry name" value="SHKT"/>
    <property type="match status" value="1"/>
</dbReference>
<proteinExistence type="inferred from homology"/>
<accession>E2S066</accession>
<organism>
    <name type="scientific">Thalassianthus aster</name>
    <name type="common">Fuzzy-tipped anemone</name>
    <dbReference type="NCBI Taxonomy" id="659516"/>
    <lineage>
        <taxon>Eukaryota</taxon>
        <taxon>Metazoa</taxon>
        <taxon>Cnidaria</taxon>
        <taxon>Anthozoa</taxon>
        <taxon>Hexacorallia</taxon>
        <taxon>Actiniaria</taxon>
        <taxon>Nynantheae</taxon>
        <taxon>Thalassianthidae</taxon>
        <taxon>Thalassianthus</taxon>
    </lineage>
</organism>
<reference key="1">
    <citation type="journal article" date="2010" name="Mar. Drugs">
        <title>Screening and cDNA cloning of Kv1 potassium channel toxins in sea anemones.</title>
        <authorList>
            <person name="Yamaguchi Y."/>
            <person name="Hasegawa Y."/>
            <person name="Honma T."/>
            <person name="Nagashima Y."/>
            <person name="Shiomi K."/>
        </authorList>
    </citation>
    <scope>NUCLEOTIDE SEQUENCE [MRNA]</scope>
</reference>
<reference key="2">
    <citation type="journal article" date="2019" name="Biochem. Biophys. Res. Commun.">
        <title>Identification of novel Kv1.3 targeting venom peptides by a single round of autocrine-based selection.</title>
        <authorList>
            <person name="Liu Y."/>
            <person name="Zhang J."/>
            <person name="Wang R."/>
            <person name="Wu Y."/>
            <person name="Wang W."/>
            <person name="Xin X."/>
            <person name="Du M."/>
            <person name="Cao Y."/>
            <person name="Zhang H."/>
        </authorList>
    </citation>
    <scope>FUNCTION</scope>
    <scope>RECOMBINANT EXPRESSION</scope>
</reference>
<feature type="signal peptide" evidence="3">
    <location>
        <begin position="1"/>
        <end position="22"/>
    </location>
</feature>
<feature type="propeptide" id="PRO_0000425844" evidence="1">
    <location>
        <begin position="23"/>
        <end position="40"/>
    </location>
</feature>
<feature type="peptide" id="PRO_0000425843" description="Kappa-thalatoxin-Tas2a" evidence="2">
    <location>
        <begin position="41"/>
        <end position="75"/>
    </location>
</feature>
<feature type="domain" description="ShKT" evidence="4">
    <location>
        <begin position="43"/>
        <end position="75"/>
    </location>
</feature>
<feature type="site" description="Important residue for binding Kv1.3/KCNA3" evidence="2">
    <location>
        <position position="47"/>
    </location>
</feature>
<feature type="site" description="Important residue for binding Kv1.3/KCNA3" evidence="2">
    <location>
        <position position="49"/>
    </location>
</feature>
<feature type="site" description="Important residue for binding Kv1.3/KCNA3" evidence="2">
    <location>
        <position position="51"/>
    </location>
</feature>
<feature type="site" description="Important residue for binding Kv1.3/KCNA3" evidence="2">
    <location>
        <position position="60"/>
    </location>
</feature>
<feature type="site" description="Important residue for binding Kv1.3/KCNA3" evidence="2">
    <location>
        <position position="61"/>
    </location>
</feature>
<feature type="site" description="Key residue for binding both Kv1.2/KCNA2 and Kv1.3/KCNA3 (occludes the channel pore like a cork in a bottle)" evidence="2">
    <location>
        <position position="62"/>
    </location>
</feature>
<feature type="site" description="Important residue for binding Kv1.3/KCNA3" evidence="2">
    <location>
        <position position="63"/>
    </location>
</feature>
<feature type="site" description="Important residue for binding Kv1.3/KCNA3" evidence="2">
    <location>
        <position position="67"/>
    </location>
</feature>
<feature type="disulfide bond" evidence="2">
    <location>
        <begin position="43"/>
        <end position="75"/>
    </location>
</feature>
<feature type="disulfide bond" evidence="2">
    <location>
        <begin position="52"/>
        <end position="68"/>
    </location>
</feature>
<feature type="disulfide bond" evidence="2">
    <location>
        <begin position="57"/>
        <end position="72"/>
    </location>
</feature>
<protein>
    <recommendedName>
        <fullName evidence="7">Kappa-thalatoxin-Tas2a</fullName>
        <shortName evidence="7">Kappa-TATX-Tas2a</shortName>
    </recommendedName>
    <alternativeName>
        <fullName evidence="6">Kappa1.3-thalatoxin-Ta1a</fullName>
        <shortName evidence="8">Kappa1.3-TATX-Ta1a</shortName>
        <shortName evidence="6">Kappa1.3-TLTX-Ta1a</shortName>
    </alternativeName>
    <alternativeName>
        <fullName evidence="9">Potassium channel peptide toxin ta-k</fullName>
        <shortName evidence="7">TaK</shortName>
    </alternativeName>
</protein>
<sequence>MKFQMIAAVLLIAFCLSVVVTARMELQDDEEMKNGSFQKRRTCIDTIPKSRCTAFQCKHSMKYRLSFCRKTCGTC</sequence>
<evidence type="ECO:0000250" key="1"/>
<evidence type="ECO:0000250" key="2">
    <source>
        <dbReference type="UniProtKB" id="P29187"/>
    </source>
</evidence>
<evidence type="ECO:0000255" key="3"/>
<evidence type="ECO:0000255" key="4">
    <source>
        <dbReference type="PROSITE-ProRule" id="PRU01005"/>
    </source>
</evidence>
<evidence type="ECO:0000269" key="5">
    <source>
    </source>
</evidence>
<evidence type="ECO:0000303" key="6">
    <source>
    </source>
</evidence>
<evidence type="ECO:0000305" key="7"/>
<evidence type="ECO:0000305" key="8">
    <source>
    </source>
</evidence>
<evidence type="ECO:0000312" key="9">
    <source>
        <dbReference type="EMBL" id="BAJ23163.1"/>
    </source>
</evidence>
<comment type="function">
    <text evidence="2 5">Inhibits voltage-gated potassium channels (Kv) with higher potency for Kv1.1/KCNA1 and Kv1.3/KCNA3 (IC(50)=3.4 nM).</text>
</comment>
<comment type="subcellular location">
    <subcellularLocation>
        <location evidence="7">Secreted</location>
    </subcellularLocation>
    <subcellularLocation>
        <location evidence="7">Nematocyst</location>
    </subcellularLocation>
</comment>
<comment type="miscellaneous">
    <text evidence="8">This protein is also called kappa-TLTX-Hh1a (PubMed:21339955). The TATX abbreviation is given to this protein, since the abbreviation TLTX was already given to a spider family.</text>
</comment>
<comment type="similarity">
    <text evidence="7">Belongs to the sea anemone type 1 potassium channel toxin family. Type 1a subfamily.</text>
</comment>